<protein>
    <recommendedName>
        <fullName evidence="1">DnaA initiator-associating protein DiaA</fullName>
    </recommendedName>
</protein>
<comment type="function">
    <text evidence="1">Required for the timely initiation of chromosomal replication via direct interactions with the DnaA initiator protein.</text>
</comment>
<comment type="subunit">
    <text evidence="1">Homotetramer; dimer of dimers.</text>
</comment>
<comment type="similarity">
    <text evidence="1">Belongs to the SIS family. DiaA subfamily.</text>
</comment>
<proteinExistence type="inferred from homology"/>
<organism>
    <name type="scientific">Escherichia fergusonii (strain ATCC 35469 / DSM 13698 / CCUG 18766 / IAM 14443 / JCM 21226 / LMG 7866 / NBRC 102419 / NCTC 12128 / CDC 0568-73)</name>
    <dbReference type="NCBI Taxonomy" id="585054"/>
    <lineage>
        <taxon>Bacteria</taxon>
        <taxon>Pseudomonadati</taxon>
        <taxon>Pseudomonadota</taxon>
        <taxon>Gammaproteobacteria</taxon>
        <taxon>Enterobacterales</taxon>
        <taxon>Enterobacteriaceae</taxon>
        <taxon>Escherichia</taxon>
    </lineage>
</organism>
<evidence type="ECO:0000255" key="1">
    <source>
        <dbReference type="HAMAP-Rule" id="MF_01157"/>
    </source>
</evidence>
<reference key="1">
    <citation type="journal article" date="2009" name="PLoS Genet.">
        <title>Organised genome dynamics in the Escherichia coli species results in highly diverse adaptive paths.</title>
        <authorList>
            <person name="Touchon M."/>
            <person name="Hoede C."/>
            <person name="Tenaillon O."/>
            <person name="Barbe V."/>
            <person name="Baeriswyl S."/>
            <person name="Bidet P."/>
            <person name="Bingen E."/>
            <person name="Bonacorsi S."/>
            <person name="Bouchier C."/>
            <person name="Bouvet O."/>
            <person name="Calteau A."/>
            <person name="Chiapello H."/>
            <person name="Clermont O."/>
            <person name="Cruveiller S."/>
            <person name="Danchin A."/>
            <person name="Diard M."/>
            <person name="Dossat C."/>
            <person name="Karoui M.E."/>
            <person name="Frapy E."/>
            <person name="Garry L."/>
            <person name="Ghigo J.M."/>
            <person name="Gilles A.M."/>
            <person name="Johnson J."/>
            <person name="Le Bouguenec C."/>
            <person name="Lescat M."/>
            <person name="Mangenot S."/>
            <person name="Martinez-Jehanne V."/>
            <person name="Matic I."/>
            <person name="Nassif X."/>
            <person name="Oztas S."/>
            <person name="Petit M.A."/>
            <person name="Pichon C."/>
            <person name="Rouy Z."/>
            <person name="Ruf C.S."/>
            <person name="Schneider D."/>
            <person name="Tourret J."/>
            <person name="Vacherie B."/>
            <person name="Vallenet D."/>
            <person name="Medigue C."/>
            <person name="Rocha E.P.C."/>
            <person name="Denamur E."/>
        </authorList>
    </citation>
    <scope>NUCLEOTIDE SEQUENCE [LARGE SCALE GENOMIC DNA]</scope>
    <source>
        <strain>ATCC 35469 / DSM 13698 / BCRC 15582 / CCUG 18766 / IAM 14443 / JCM 21226 / LMG 7866 / NBRC 102419 / NCTC 12128 / CDC 0568-73</strain>
    </source>
</reference>
<dbReference type="EMBL" id="CU928158">
    <property type="protein sequence ID" value="CAQ91764.1"/>
    <property type="molecule type" value="Genomic_DNA"/>
</dbReference>
<dbReference type="RefSeq" id="WP_001158035.1">
    <property type="nucleotide sequence ID" value="NC_011740.1"/>
</dbReference>
<dbReference type="SMR" id="B7LMT6"/>
<dbReference type="GeneID" id="75206004"/>
<dbReference type="KEGG" id="efe:EFER_4346"/>
<dbReference type="HOGENOM" id="CLU_080999_3_1_6"/>
<dbReference type="OrthoDB" id="9810929at2"/>
<dbReference type="Proteomes" id="UP000000745">
    <property type="component" value="Chromosome"/>
</dbReference>
<dbReference type="GO" id="GO:0097367">
    <property type="term" value="F:carbohydrate derivative binding"/>
    <property type="evidence" value="ECO:0007669"/>
    <property type="project" value="InterPro"/>
</dbReference>
<dbReference type="GO" id="GO:1901135">
    <property type="term" value="P:carbohydrate derivative metabolic process"/>
    <property type="evidence" value="ECO:0007669"/>
    <property type="project" value="InterPro"/>
</dbReference>
<dbReference type="GO" id="GO:0006260">
    <property type="term" value="P:DNA replication"/>
    <property type="evidence" value="ECO:0007669"/>
    <property type="project" value="UniProtKB-UniRule"/>
</dbReference>
<dbReference type="CDD" id="cd05006">
    <property type="entry name" value="SIS_GmhA"/>
    <property type="match status" value="1"/>
</dbReference>
<dbReference type="FunFam" id="3.40.50.10490:FF:000006">
    <property type="entry name" value="DnaA initiator-associating protein DiaA"/>
    <property type="match status" value="1"/>
</dbReference>
<dbReference type="Gene3D" id="3.40.50.10490">
    <property type="entry name" value="Glucose-6-phosphate isomerase like protein, domain 1"/>
    <property type="match status" value="1"/>
</dbReference>
<dbReference type="HAMAP" id="MF_01157">
    <property type="entry name" value="SIS_DiaA"/>
    <property type="match status" value="1"/>
</dbReference>
<dbReference type="InterPro" id="IPR023070">
    <property type="entry name" value="DiaA"/>
</dbReference>
<dbReference type="InterPro" id="IPR035461">
    <property type="entry name" value="GmhA/DiaA"/>
</dbReference>
<dbReference type="InterPro" id="IPR001347">
    <property type="entry name" value="SIS_dom"/>
</dbReference>
<dbReference type="InterPro" id="IPR046348">
    <property type="entry name" value="SIS_dom_sf"/>
</dbReference>
<dbReference type="InterPro" id="IPR050099">
    <property type="entry name" value="SIS_GmhA/DiaA_subfam"/>
</dbReference>
<dbReference type="NCBIfam" id="NF008138">
    <property type="entry name" value="PRK10886.1"/>
    <property type="match status" value="1"/>
</dbReference>
<dbReference type="NCBIfam" id="NF010546">
    <property type="entry name" value="PRK13936.1"/>
    <property type="match status" value="1"/>
</dbReference>
<dbReference type="PANTHER" id="PTHR30390:SF6">
    <property type="entry name" value="DNAA INITIATOR-ASSOCIATING PROTEIN DIAA"/>
    <property type="match status" value="1"/>
</dbReference>
<dbReference type="PANTHER" id="PTHR30390">
    <property type="entry name" value="SEDOHEPTULOSE 7-PHOSPHATE ISOMERASE / DNAA INITIATOR-ASSOCIATING FACTOR FOR REPLICATION INITIATION"/>
    <property type="match status" value="1"/>
</dbReference>
<dbReference type="Pfam" id="PF13580">
    <property type="entry name" value="SIS_2"/>
    <property type="match status" value="1"/>
</dbReference>
<dbReference type="SUPFAM" id="SSF53697">
    <property type="entry name" value="SIS domain"/>
    <property type="match status" value="1"/>
</dbReference>
<dbReference type="PROSITE" id="PS51464">
    <property type="entry name" value="SIS"/>
    <property type="match status" value="1"/>
</dbReference>
<sequence>MQERIKACFTESIQTQIAAAEALPDAISRAAMTLVQSLLNGNKILCCGNGTSAANAQHFAASMINRFETERPSLPAIALNTDNVVLTAIANDRLHDEVYAKQVRALGHAGDVLLAISTRGNSRDIVKAVEAAVTRDMTIVALTGYDGGELAGLLGPQDVEIRIPSHRSARIQEMHMLTVNCLCDLIDNTLFPHQDV</sequence>
<feature type="chain" id="PRO_1000137793" description="DnaA initiator-associating protein DiaA">
    <location>
        <begin position="1"/>
        <end position="196"/>
    </location>
</feature>
<feature type="domain" description="SIS" evidence="1">
    <location>
        <begin position="34"/>
        <end position="196"/>
    </location>
</feature>
<name>DIAA_ESCF3</name>
<accession>B7LMT6</accession>
<keyword id="KW-0235">DNA replication</keyword>
<gene>
    <name evidence="1" type="primary">diaA</name>
    <name type="ordered locus">EFER_4346</name>
</gene>